<comment type="function">
    <text evidence="1">Alpha toxins bind voltage-independently at site-3 of sodium channels (Nav) and inhibit the inactivation of the activated channels, thereby blocking neuronal transmission.</text>
</comment>
<comment type="subcellular location">
    <subcellularLocation>
        <location>Secreted</location>
    </subcellularLocation>
</comment>
<comment type="tissue specificity">
    <text>Expressed by the venom gland.</text>
</comment>
<comment type="domain">
    <text evidence="4">Has the structural arrangement of an alpha-helix connected to antiparallel beta-sheets by disulfide bonds (CS-alpha/beta).</text>
</comment>
<comment type="PTM">
    <text>The C-terminal basic residue is removed by a carboxypeptidase.</text>
</comment>
<comment type="similarity">
    <text evidence="4">Belongs to the long (4 C-C) scorpion toxin superfamily. Sodium channel inhibitor family. Alpha subfamily.</text>
</comment>
<keyword id="KW-0903">Direct protein sequencing</keyword>
<keyword id="KW-1015">Disulfide bond</keyword>
<keyword id="KW-0872">Ion channel impairing toxin</keyword>
<keyword id="KW-0528">Neurotoxin</keyword>
<keyword id="KW-0964">Secreted</keyword>
<keyword id="KW-0732">Signal</keyword>
<keyword id="KW-0800">Toxin</keyword>
<keyword id="KW-0738">Voltage-gated sodium channel impairing toxin</keyword>
<gene>
    <name type="primary">H1</name>
</gene>
<evidence type="ECO:0000250" key="1"/>
<evidence type="ECO:0000255" key="2">
    <source>
        <dbReference type="PROSITE-ProRule" id="PRU01210"/>
    </source>
</evidence>
<evidence type="ECO:0000269" key="3">
    <source>
    </source>
</evidence>
<evidence type="ECO:0000305" key="4"/>
<accession>Q86SE1</accession>
<protein>
    <recommendedName>
        <fullName>Toxin Aam1</fullName>
    </recommendedName>
    <alternativeName>
        <fullName>AamH1</fullName>
    </alternativeName>
    <alternativeName>
        <fullName>Alpha-neurotoxin 1</fullName>
    </alternativeName>
</protein>
<reference key="1">
    <citation type="journal article" date="2003" name="Regul. Pept.">
        <title>Isolation of scorpion (Androctonus amoreuxi) putative alpha neurotoxins and parallel cloning of their respective cDNAs from a single sample of venom.</title>
        <authorList>
            <person name="Chen T."/>
            <person name="Folan R."/>
            <person name="Kwok H."/>
            <person name="O'Kane E.J."/>
            <person name="Bjourson A.J."/>
            <person name="Shaw C."/>
        </authorList>
    </citation>
    <scope>NUCLEOTIDE SEQUENCE [MRNA]</scope>
    <scope>PROTEIN SEQUENCE OF 20-82</scope>
    <source>
        <tissue>Venom</tissue>
        <tissue>Venom gland</tissue>
    </source>
</reference>
<feature type="signal peptide" evidence="3">
    <location>
        <begin position="1"/>
        <end position="19"/>
    </location>
</feature>
<feature type="chain" id="PRO_0000035214" description="Toxin Aam1">
    <location>
        <begin position="20"/>
        <end position="82"/>
    </location>
</feature>
<feature type="domain" description="LCN-type CS-alpha/beta" evidence="2">
    <location>
        <begin position="21"/>
        <end position="82"/>
    </location>
</feature>
<feature type="disulfide bond" evidence="2">
    <location>
        <begin position="31"/>
        <end position="81"/>
    </location>
</feature>
<feature type="disulfide bond" evidence="2">
    <location>
        <begin position="35"/>
        <end position="53"/>
    </location>
</feature>
<feature type="disulfide bond" evidence="2">
    <location>
        <begin position="39"/>
        <end position="63"/>
    </location>
</feature>
<feature type="disulfide bond" evidence="2">
    <location>
        <begin position="43"/>
        <end position="65"/>
    </location>
</feature>
<organism>
    <name type="scientific">Androctonus amoreuxi</name>
    <name type="common">African fattail scorpion</name>
    <name type="synonym">Scorpio amoreuxi</name>
    <dbReference type="NCBI Taxonomy" id="112024"/>
    <lineage>
        <taxon>Eukaryota</taxon>
        <taxon>Metazoa</taxon>
        <taxon>Ecdysozoa</taxon>
        <taxon>Arthropoda</taxon>
        <taxon>Chelicerata</taxon>
        <taxon>Arachnida</taxon>
        <taxon>Scorpiones</taxon>
        <taxon>Buthida</taxon>
        <taxon>Buthoidea</taxon>
        <taxon>Buthidae</taxon>
        <taxon>Androctonus</taxon>
    </lineage>
</organism>
<sequence>MNYLVMISLALLLMIGVESVRDGYIVYPHNCVYHCIPSCDGLCKENGATSGSCGYIIKVGIACWCKDLPENVPIYDRSYKCYR</sequence>
<proteinExistence type="evidence at protein level"/>
<dbReference type="EMBL" id="AJ536595">
    <property type="protein sequence ID" value="CAD60539.1"/>
    <property type="molecule type" value="mRNA"/>
</dbReference>
<dbReference type="SMR" id="Q86SE1"/>
<dbReference type="GO" id="GO:0005576">
    <property type="term" value="C:extracellular region"/>
    <property type="evidence" value="ECO:0007669"/>
    <property type="project" value="UniProtKB-SubCell"/>
</dbReference>
<dbReference type="GO" id="GO:0019871">
    <property type="term" value="F:sodium channel inhibitor activity"/>
    <property type="evidence" value="ECO:0007669"/>
    <property type="project" value="InterPro"/>
</dbReference>
<dbReference type="GO" id="GO:0090729">
    <property type="term" value="F:toxin activity"/>
    <property type="evidence" value="ECO:0007669"/>
    <property type="project" value="UniProtKB-KW"/>
</dbReference>
<dbReference type="GO" id="GO:0006952">
    <property type="term" value="P:defense response"/>
    <property type="evidence" value="ECO:0007669"/>
    <property type="project" value="InterPro"/>
</dbReference>
<dbReference type="CDD" id="cd23106">
    <property type="entry name" value="neurotoxins_LC_scorpion"/>
    <property type="match status" value="1"/>
</dbReference>
<dbReference type="Gene3D" id="3.30.30.10">
    <property type="entry name" value="Knottin, scorpion toxin-like"/>
    <property type="match status" value="1"/>
</dbReference>
<dbReference type="InterPro" id="IPR044062">
    <property type="entry name" value="LCN-type_CS_alpha_beta_dom"/>
</dbReference>
<dbReference type="InterPro" id="IPR003614">
    <property type="entry name" value="Scorpion_toxin-like"/>
</dbReference>
<dbReference type="InterPro" id="IPR036574">
    <property type="entry name" value="Scorpion_toxin-like_sf"/>
</dbReference>
<dbReference type="InterPro" id="IPR002061">
    <property type="entry name" value="Scorpion_toxinL/defensin"/>
</dbReference>
<dbReference type="Pfam" id="PF00537">
    <property type="entry name" value="Toxin_3"/>
    <property type="match status" value="1"/>
</dbReference>
<dbReference type="SMART" id="SM00505">
    <property type="entry name" value="Knot1"/>
    <property type="match status" value="1"/>
</dbReference>
<dbReference type="SUPFAM" id="SSF57095">
    <property type="entry name" value="Scorpion toxin-like"/>
    <property type="match status" value="1"/>
</dbReference>
<dbReference type="PROSITE" id="PS51863">
    <property type="entry name" value="LCN_CSAB"/>
    <property type="match status" value="1"/>
</dbReference>
<name>SCX1_ANDAM</name>